<dbReference type="EC" id="7.1.1.2"/>
<dbReference type="EMBL" id="U02291">
    <property type="protein sequence ID" value="AAA77667.1"/>
    <property type="molecule type" value="Genomic_DNA"/>
</dbReference>
<dbReference type="EMBL" id="AB000109">
    <property type="protein sequence ID" value="BAA78086.1"/>
    <property type="molecule type" value="Genomic_DNA"/>
</dbReference>
<dbReference type="PIR" id="T43783">
    <property type="entry name" value="T43783"/>
</dbReference>
<dbReference type="RefSeq" id="NP_050104.1">
    <property type="nucleotide sequence ID" value="NC_000895.1"/>
</dbReference>
<dbReference type="SMR" id="Q34312"/>
<dbReference type="FunCoup" id="Q34312">
    <property type="interactions" value="619"/>
</dbReference>
<dbReference type="STRING" id="44689.Q34312"/>
<dbReference type="KEGG" id="ddi:DidioMp37"/>
<dbReference type="dictyBase" id="DDB_G0294052">
    <property type="gene designation" value="nad11"/>
</dbReference>
<dbReference type="VEuPathDB" id="AmoebaDB:DidioMp37"/>
<dbReference type="InParanoid" id="Q34312"/>
<dbReference type="OMA" id="CSAIFNA"/>
<dbReference type="PhylomeDB" id="Q34312"/>
<dbReference type="Reactome" id="R-DDI-6799198">
    <property type="pathway name" value="Complex I biogenesis"/>
</dbReference>
<dbReference type="Reactome" id="R-DDI-9837999">
    <property type="pathway name" value="Mitochondrial protein degradation"/>
</dbReference>
<dbReference type="PRO" id="PR:Q34312"/>
<dbReference type="Proteomes" id="UP000002195">
    <property type="component" value="Mitochondrion"/>
</dbReference>
<dbReference type="GO" id="GO:0005743">
    <property type="term" value="C:mitochondrial inner membrane"/>
    <property type="evidence" value="ECO:0007669"/>
    <property type="project" value="UniProtKB-SubCell"/>
</dbReference>
<dbReference type="GO" id="GO:0051537">
    <property type="term" value="F:2 iron, 2 sulfur cluster binding"/>
    <property type="evidence" value="ECO:0007669"/>
    <property type="project" value="UniProtKB-KW"/>
</dbReference>
<dbReference type="GO" id="GO:0051539">
    <property type="term" value="F:4 iron, 4 sulfur cluster binding"/>
    <property type="evidence" value="ECO:0007669"/>
    <property type="project" value="UniProtKB-KW"/>
</dbReference>
<dbReference type="GO" id="GO:0046872">
    <property type="term" value="F:metal ion binding"/>
    <property type="evidence" value="ECO:0007669"/>
    <property type="project" value="UniProtKB-KW"/>
</dbReference>
<dbReference type="GO" id="GO:0008137">
    <property type="term" value="F:NADH dehydrogenase (ubiquinone) activity"/>
    <property type="evidence" value="ECO:0007669"/>
    <property type="project" value="UniProtKB-EC"/>
</dbReference>
<dbReference type="GO" id="GO:0042773">
    <property type="term" value="P:ATP synthesis coupled electron transport"/>
    <property type="evidence" value="ECO:0007669"/>
    <property type="project" value="InterPro"/>
</dbReference>
<dbReference type="GO" id="GO:0032981">
    <property type="term" value="P:mitochondrial respiratory chain complex I assembly"/>
    <property type="evidence" value="ECO:0000318"/>
    <property type="project" value="GO_Central"/>
</dbReference>
<dbReference type="CDD" id="cd00207">
    <property type="entry name" value="fer2"/>
    <property type="match status" value="1"/>
</dbReference>
<dbReference type="CDD" id="cd02774">
    <property type="entry name" value="MopB_Res-Cmplx1_Nad11-M"/>
    <property type="match status" value="1"/>
</dbReference>
<dbReference type="FunFam" id="3.10.20.740:FF:000004">
    <property type="entry name" value="NADH-quinone oxidoreductase"/>
    <property type="match status" value="1"/>
</dbReference>
<dbReference type="FunFam" id="3.30.70.20:FF:000002">
    <property type="entry name" value="NADH-ubiquinone oxidoreductase 75 kDa subunit"/>
    <property type="match status" value="1"/>
</dbReference>
<dbReference type="Gene3D" id="3.10.20.740">
    <property type="match status" value="1"/>
</dbReference>
<dbReference type="Gene3D" id="3.30.70.20">
    <property type="match status" value="1"/>
</dbReference>
<dbReference type="InterPro" id="IPR036010">
    <property type="entry name" value="2Fe-2S_ferredoxin-like_sf"/>
</dbReference>
<dbReference type="InterPro" id="IPR001041">
    <property type="entry name" value="2Fe-2S_ferredoxin-type"/>
</dbReference>
<dbReference type="InterPro" id="IPR006656">
    <property type="entry name" value="Mopterin_OxRdtase"/>
</dbReference>
<dbReference type="InterPro" id="IPR006963">
    <property type="entry name" value="Mopterin_OxRdtase_4Fe-4S_dom"/>
</dbReference>
<dbReference type="InterPro" id="IPR000283">
    <property type="entry name" value="NADH_UbQ_OxRdtase_75kDa_su_CS"/>
</dbReference>
<dbReference type="InterPro" id="IPR054351">
    <property type="entry name" value="NADH_UbQ_OxRdtase_ferredoxin"/>
</dbReference>
<dbReference type="InterPro" id="IPR010228">
    <property type="entry name" value="NADH_UbQ_OxRdtase_Gsu"/>
</dbReference>
<dbReference type="InterPro" id="IPR019574">
    <property type="entry name" value="NADH_UbQ_OxRdtase_Gsu_4Fe4S-bd"/>
</dbReference>
<dbReference type="InterPro" id="IPR050123">
    <property type="entry name" value="Prok_molybdopt-oxidoreductase"/>
</dbReference>
<dbReference type="NCBIfam" id="TIGR01973">
    <property type="entry name" value="NuoG"/>
    <property type="match status" value="1"/>
</dbReference>
<dbReference type="PANTHER" id="PTHR43105:SF13">
    <property type="entry name" value="NADH-UBIQUINONE OXIDOREDUCTASE 75 KDA SUBUNIT, MITOCHONDRIAL"/>
    <property type="match status" value="1"/>
</dbReference>
<dbReference type="PANTHER" id="PTHR43105">
    <property type="entry name" value="RESPIRATORY NITRATE REDUCTASE"/>
    <property type="match status" value="1"/>
</dbReference>
<dbReference type="Pfam" id="PF13510">
    <property type="entry name" value="Fer2_4"/>
    <property type="match status" value="1"/>
</dbReference>
<dbReference type="Pfam" id="PF22151">
    <property type="entry name" value="Fer4_NDSU1"/>
    <property type="match status" value="1"/>
</dbReference>
<dbReference type="Pfam" id="PF22117">
    <property type="entry name" value="Fer4_Nqo3"/>
    <property type="match status" value="1"/>
</dbReference>
<dbReference type="Pfam" id="PF00384">
    <property type="entry name" value="Molybdopterin"/>
    <property type="match status" value="1"/>
</dbReference>
<dbReference type="Pfam" id="PF10588">
    <property type="entry name" value="NADH-G_4Fe-4S_3"/>
    <property type="match status" value="1"/>
</dbReference>
<dbReference type="SMART" id="SM00929">
    <property type="entry name" value="NADH-G_4Fe-4S_3"/>
    <property type="match status" value="1"/>
</dbReference>
<dbReference type="SUPFAM" id="SSF54292">
    <property type="entry name" value="2Fe-2S ferredoxin-like"/>
    <property type="match status" value="1"/>
</dbReference>
<dbReference type="SUPFAM" id="SSF54862">
    <property type="entry name" value="4Fe-4S ferredoxins"/>
    <property type="match status" value="1"/>
</dbReference>
<dbReference type="SUPFAM" id="SSF53706">
    <property type="entry name" value="Formate dehydrogenase/DMSO reductase, domains 1-3"/>
    <property type="match status" value="1"/>
</dbReference>
<dbReference type="PROSITE" id="PS51085">
    <property type="entry name" value="2FE2S_FER_2"/>
    <property type="match status" value="1"/>
</dbReference>
<dbReference type="PROSITE" id="PS51839">
    <property type="entry name" value="4FE4S_HC3"/>
    <property type="match status" value="1"/>
</dbReference>
<dbReference type="PROSITE" id="PS51669">
    <property type="entry name" value="4FE4S_MOW_BIS_MGD"/>
    <property type="match status" value="1"/>
</dbReference>
<dbReference type="PROSITE" id="PS00641">
    <property type="entry name" value="COMPLEX1_75K_1"/>
    <property type="match status" value="1"/>
</dbReference>
<dbReference type="PROSITE" id="PS00642">
    <property type="entry name" value="COMPLEX1_75K_2"/>
    <property type="match status" value="1"/>
</dbReference>
<dbReference type="PROSITE" id="PS00643">
    <property type="entry name" value="COMPLEX1_75K_3"/>
    <property type="match status" value="1"/>
</dbReference>
<comment type="function">
    <text evidence="1">Core subunit of the mitochondrial membrane respiratory chain NADH dehydrogenase (Complex I) that is believed to belong to the minimal assembly required for catalysis. Complex I functions in the transfer of electrons from NADH to the respiratory chain. The immediate electron acceptor for the enzyme is believed to be ubiquinone (By similarity). This is the largest subunit of complex I and it is a component of the iron-sulfur (IP) fragment of the enzyme. It may form part of the active site crevice where NADH is oxidized (By similarity).</text>
</comment>
<comment type="catalytic activity">
    <reaction>
        <text>a ubiquinone + NADH + 5 H(+)(in) = a ubiquinol + NAD(+) + 4 H(+)(out)</text>
        <dbReference type="Rhea" id="RHEA:29091"/>
        <dbReference type="Rhea" id="RHEA-COMP:9565"/>
        <dbReference type="Rhea" id="RHEA-COMP:9566"/>
        <dbReference type="ChEBI" id="CHEBI:15378"/>
        <dbReference type="ChEBI" id="CHEBI:16389"/>
        <dbReference type="ChEBI" id="CHEBI:17976"/>
        <dbReference type="ChEBI" id="CHEBI:57540"/>
        <dbReference type="ChEBI" id="CHEBI:57945"/>
        <dbReference type="EC" id="7.1.1.2"/>
    </reaction>
</comment>
<comment type="cofactor">
    <cofactor evidence="1">
        <name>[2Fe-2S] cluster</name>
        <dbReference type="ChEBI" id="CHEBI:190135"/>
    </cofactor>
    <text evidence="1">Binds 1 [2Fe-2S] cluster per subunit.</text>
</comment>
<comment type="cofactor">
    <cofactor evidence="1">
        <name>[4Fe-4S] cluster</name>
        <dbReference type="ChEBI" id="CHEBI:49883"/>
    </cofactor>
    <text evidence="1">Binds 2 [4Fe-4S] clusters per subunit.</text>
</comment>
<comment type="subunit">
    <text evidence="1">Complex I is composed of about 45 different subunits.</text>
</comment>
<comment type="subcellular location">
    <subcellularLocation>
        <location evidence="1">Mitochondrion inner membrane</location>
    </subcellularLocation>
    <text evidence="1">Matrix and cytoplasmic side of the mitochondrial inner membrane.</text>
</comment>
<comment type="similarity">
    <text evidence="5">Belongs to the complex I 75 kDa subunit family.</text>
</comment>
<organism>
    <name type="scientific">Dictyostelium discoideum</name>
    <name type="common">Social amoeba</name>
    <dbReference type="NCBI Taxonomy" id="44689"/>
    <lineage>
        <taxon>Eukaryota</taxon>
        <taxon>Amoebozoa</taxon>
        <taxon>Evosea</taxon>
        <taxon>Eumycetozoa</taxon>
        <taxon>Dictyostelia</taxon>
        <taxon>Dictyosteliales</taxon>
        <taxon>Dictyosteliaceae</taxon>
        <taxon>Dictyostelium</taxon>
    </lineage>
</organism>
<feature type="chain" id="PRO_0000327377" description="NADH-ubiquinone oxidoreductase 75 kDa subunit">
    <location>
        <begin position="1"/>
        <end position="688"/>
    </location>
</feature>
<feature type="domain" description="2Fe-2S ferredoxin-type" evidence="2">
    <location>
        <begin position="1"/>
        <end position="85"/>
    </location>
</feature>
<feature type="domain" description="4Fe-4S His(Cys)3-ligated-type" evidence="4">
    <location>
        <begin position="85"/>
        <end position="124"/>
    </location>
</feature>
<feature type="domain" description="4Fe-4S Mo/W bis-MGD-type" evidence="3">
    <location>
        <begin position="223"/>
        <end position="279"/>
    </location>
</feature>
<feature type="binding site" evidence="1">
    <location>
        <position position="38"/>
    </location>
    <ligand>
        <name>[2Fe-2S] cluster</name>
        <dbReference type="ChEBI" id="CHEBI:190135"/>
    </ligand>
</feature>
<feature type="binding site" evidence="1">
    <location>
        <position position="49"/>
    </location>
    <ligand>
        <name>[2Fe-2S] cluster</name>
        <dbReference type="ChEBI" id="CHEBI:190135"/>
    </ligand>
</feature>
<feature type="binding site" evidence="1">
    <location>
        <position position="52"/>
    </location>
    <ligand>
        <name>[2Fe-2S] cluster</name>
        <dbReference type="ChEBI" id="CHEBI:190135"/>
    </ligand>
</feature>
<feature type="binding site" evidence="1">
    <location>
        <position position="66"/>
    </location>
    <ligand>
        <name>[2Fe-2S] cluster</name>
        <dbReference type="ChEBI" id="CHEBI:190135"/>
    </ligand>
</feature>
<feature type="binding site" evidence="4">
    <location>
        <position position="101"/>
    </location>
    <ligand>
        <name>[4Fe-4S] cluster</name>
        <dbReference type="ChEBI" id="CHEBI:49883"/>
        <label>1</label>
    </ligand>
</feature>
<feature type="binding site" evidence="4">
    <location>
        <position position="105"/>
    </location>
    <ligand>
        <name>[4Fe-4S] cluster</name>
        <dbReference type="ChEBI" id="CHEBI:49883"/>
        <label>1</label>
    </ligand>
</feature>
<feature type="binding site" evidence="4">
    <location>
        <position position="108"/>
    </location>
    <ligand>
        <name>[4Fe-4S] cluster</name>
        <dbReference type="ChEBI" id="CHEBI:49883"/>
        <label>1</label>
    </ligand>
</feature>
<feature type="binding site" evidence="4">
    <location>
        <position position="114"/>
    </location>
    <ligand>
        <name>[4Fe-4S] cluster</name>
        <dbReference type="ChEBI" id="CHEBI:49883"/>
        <label>1</label>
    </ligand>
</feature>
<feature type="binding site" evidence="1">
    <location>
        <position position="153"/>
    </location>
    <ligand>
        <name>[4Fe-4S] cluster</name>
        <dbReference type="ChEBI" id="CHEBI:49883"/>
        <label>2</label>
    </ligand>
</feature>
<feature type="binding site" evidence="1">
    <location>
        <position position="156"/>
    </location>
    <ligand>
        <name>[4Fe-4S] cluster</name>
        <dbReference type="ChEBI" id="CHEBI:49883"/>
        <label>2</label>
    </ligand>
</feature>
<feature type="binding site" evidence="1">
    <location>
        <position position="159"/>
    </location>
    <ligand>
        <name>[4Fe-4S] cluster</name>
        <dbReference type="ChEBI" id="CHEBI:49883"/>
        <label>2</label>
    </ligand>
</feature>
<feature type="binding site" evidence="1">
    <location>
        <position position="204"/>
    </location>
    <ligand>
        <name>[4Fe-4S] cluster</name>
        <dbReference type="ChEBI" id="CHEBI:49883"/>
        <label>2</label>
    </ligand>
</feature>
<name>NDUS1_DICDI</name>
<gene>
    <name type="primary">nad11</name>
    <name type="synonym">ndufs1</name>
    <name type="ORF">DDB_G0294052</name>
</gene>
<proteinExistence type="inferred from homology"/>
<evidence type="ECO:0000250" key="1"/>
<evidence type="ECO:0000255" key="2">
    <source>
        <dbReference type="PROSITE-ProRule" id="PRU00465"/>
    </source>
</evidence>
<evidence type="ECO:0000255" key="3">
    <source>
        <dbReference type="PROSITE-ProRule" id="PRU01004"/>
    </source>
</evidence>
<evidence type="ECO:0000255" key="4">
    <source>
        <dbReference type="PROSITE-ProRule" id="PRU01184"/>
    </source>
</evidence>
<evidence type="ECO:0000305" key="5"/>
<keyword id="KW-0001">2Fe-2S</keyword>
<keyword id="KW-0004">4Fe-4S</keyword>
<keyword id="KW-0249">Electron transport</keyword>
<keyword id="KW-0408">Iron</keyword>
<keyword id="KW-0411">Iron-sulfur</keyword>
<keyword id="KW-0472">Membrane</keyword>
<keyword id="KW-0479">Metal-binding</keyword>
<keyword id="KW-0496">Mitochondrion</keyword>
<keyword id="KW-0999">Mitochondrion inner membrane</keyword>
<keyword id="KW-0520">NAD</keyword>
<keyword id="KW-0560">Oxidoreductase</keyword>
<keyword id="KW-1185">Reference proteome</keyword>
<keyword id="KW-0679">Respiratory chain</keyword>
<keyword id="KW-1278">Translocase</keyword>
<keyword id="KW-0813">Transport</keyword>
<keyword id="KW-0830">Ubiquinone</keyword>
<protein>
    <recommendedName>
        <fullName>NADH-ubiquinone oxidoreductase 75 kDa subunit</fullName>
        <ecNumber>7.1.1.2</ecNumber>
    </recommendedName>
    <alternativeName>
        <fullName>Complex I-75kD</fullName>
        <shortName>CI-75kD</shortName>
    </alternativeName>
</protein>
<sequence length="688" mass="79838">MIIRFKINEIECEVNEEKEDITILQACTANGIEIPRFCYHEKLTIAGNCRMCLVYVTNEEKLLAACGIPLDENFDDESIETEIDEILKAREGVMEFLLINHPLDCPICDQGGECDLQEQTLAYGLDTGRFYIKKRAVEIKTFGRLIKGIMTRCIHCTRCVRFLTEIAGVNELGVLGRGYNMEIGTYKKNVMIESELSGNIIDLCPVGALTSAVYAYKGRPWELKNIKGIDIFDTLLTPINYQVKGGEIFRILPRINDRINEEWITDKVRFHYESYKIIEKIRKETPSYKIQANKFIELTWKTALKMVFKVLLNKKNKVDLIIGSKINSTNLRIYKELMNRLGSKNYITENGLMFKKFNYDLRENYINSNDLYNVDKNDLVLLCGINLRVESPLLNIKLRNVNFGDDEIESVKKIGIIGNKFDWKHESEYIGATLNSMLKLFEGRLPYCQQIKKSKAPLIIVGPSLLTRISLTLQEMRAIFMKACNLKPENILIITQGANFGMALEEGLFKEKFSIGGNVLYSIDSNEVQVTNKINYVIYQGIINDKFENKIDLYLPSKHYFEDFEGDREVYMNTFGQRSEIEKLSISKGNKIKENSMIGYIQLMYLNNKEMTRKEKEQKDIKLSYREMKKEEKRKIKVNKYLTINNIIENYYMTDINIRLSKNLMITGQLRKEKKIMEAGIWKNRKCI</sequence>
<accession>Q34312</accession>
<geneLocation type="mitochondrion"/>
<reference key="1">
    <citation type="journal article" date="1994" name="J. Mol. Evol.">
        <title>The Dictyostelium discoideum mitochondrial genome: a primordial system using the universal code and encoding hydrophilic proteins atypical of metazoan mitochondrial DNA.</title>
        <authorList>
            <person name="Cole R.A."/>
            <person name="Williams K.L."/>
        </authorList>
    </citation>
    <scope>NUCLEOTIDE SEQUENCE [GENOMIC DNA]</scope>
    <source>
        <strain>X22</strain>
    </source>
</reference>
<reference key="2">
    <citation type="journal article" date="2000" name="Mol. Gen. Genet.">
        <title>The mitochondrial DNA of Dictyostelium discoideum: complete sequence, gene content and genome organization.</title>
        <authorList>
            <person name="Ogawa S."/>
            <person name="Yoshino R."/>
            <person name="Angata K."/>
            <person name="Iwamoto M."/>
            <person name="Pi M."/>
            <person name="Kuroe K."/>
            <person name="Matsuo K."/>
            <person name="Morio T."/>
            <person name="Urushihara H."/>
            <person name="Yanagisawa K."/>
            <person name="Tanaka Y."/>
        </authorList>
    </citation>
    <scope>NUCLEOTIDE SEQUENCE [LARGE SCALE GENOMIC DNA]</scope>
    <source>
        <strain>AX3</strain>
    </source>
</reference>